<dbReference type="EMBL" id="CR555306">
    <property type="protein sequence ID" value="CAI08277.1"/>
    <property type="status" value="ALT_INIT"/>
    <property type="molecule type" value="Genomic_DNA"/>
</dbReference>
<dbReference type="RefSeq" id="WP_011237968.1">
    <property type="nucleotide sequence ID" value="NC_006513.1"/>
</dbReference>
<dbReference type="SMR" id="Q5P337"/>
<dbReference type="STRING" id="76114.ebA3820"/>
<dbReference type="KEGG" id="eba:ebA3820"/>
<dbReference type="eggNOG" id="COG0048">
    <property type="taxonomic scope" value="Bacteria"/>
</dbReference>
<dbReference type="HOGENOM" id="CLU_104295_1_2_4"/>
<dbReference type="OrthoDB" id="9802366at2"/>
<dbReference type="Proteomes" id="UP000006552">
    <property type="component" value="Chromosome"/>
</dbReference>
<dbReference type="GO" id="GO:0015935">
    <property type="term" value="C:small ribosomal subunit"/>
    <property type="evidence" value="ECO:0007669"/>
    <property type="project" value="InterPro"/>
</dbReference>
<dbReference type="GO" id="GO:0019843">
    <property type="term" value="F:rRNA binding"/>
    <property type="evidence" value="ECO:0007669"/>
    <property type="project" value="UniProtKB-UniRule"/>
</dbReference>
<dbReference type="GO" id="GO:0003735">
    <property type="term" value="F:structural constituent of ribosome"/>
    <property type="evidence" value="ECO:0007669"/>
    <property type="project" value="InterPro"/>
</dbReference>
<dbReference type="GO" id="GO:0000049">
    <property type="term" value="F:tRNA binding"/>
    <property type="evidence" value="ECO:0007669"/>
    <property type="project" value="UniProtKB-UniRule"/>
</dbReference>
<dbReference type="GO" id="GO:0006412">
    <property type="term" value="P:translation"/>
    <property type="evidence" value="ECO:0007669"/>
    <property type="project" value="UniProtKB-UniRule"/>
</dbReference>
<dbReference type="CDD" id="cd03368">
    <property type="entry name" value="Ribosomal_S12"/>
    <property type="match status" value="1"/>
</dbReference>
<dbReference type="FunFam" id="2.40.50.140:FF:000001">
    <property type="entry name" value="30S ribosomal protein S12"/>
    <property type="match status" value="1"/>
</dbReference>
<dbReference type="Gene3D" id="2.40.50.140">
    <property type="entry name" value="Nucleic acid-binding proteins"/>
    <property type="match status" value="1"/>
</dbReference>
<dbReference type="HAMAP" id="MF_00403_B">
    <property type="entry name" value="Ribosomal_uS12_B"/>
    <property type="match status" value="1"/>
</dbReference>
<dbReference type="InterPro" id="IPR012340">
    <property type="entry name" value="NA-bd_OB-fold"/>
</dbReference>
<dbReference type="InterPro" id="IPR006032">
    <property type="entry name" value="Ribosomal_uS12"/>
</dbReference>
<dbReference type="InterPro" id="IPR005679">
    <property type="entry name" value="Ribosomal_uS12_bac"/>
</dbReference>
<dbReference type="NCBIfam" id="TIGR00981">
    <property type="entry name" value="rpsL_bact"/>
    <property type="match status" value="1"/>
</dbReference>
<dbReference type="PANTHER" id="PTHR11652">
    <property type="entry name" value="30S RIBOSOMAL PROTEIN S12 FAMILY MEMBER"/>
    <property type="match status" value="1"/>
</dbReference>
<dbReference type="Pfam" id="PF00164">
    <property type="entry name" value="Ribosom_S12_S23"/>
    <property type="match status" value="1"/>
</dbReference>
<dbReference type="PIRSF" id="PIRSF002133">
    <property type="entry name" value="Ribosomal_S12/S23"/>
    <property type="match status" value="1"/>
</dbReference>
<dbReference type="PRINTS" id="PR01034">
    <property type="entry name" value="RIBOSOMALS12"/>
</dbReference>
<dbReference type="SUPFAM" id="SSF50249">
    <property type="entry name" value="Nucleic acid-binding proteins"/>
    <property type="match status" value="1"/>
</dbReference>
<dbReference type="PROSITE" id="PS00055">
    <property type="entry name" value="RIBOSOMAL_S12"/>
    <property type="match status" value="1"/>
</dbReference>
<protein>
    <recommendedName>
        <fullName evidence="2">Small ribosomal subunit protein uS12</fullName>
    </recommendedName>
    <alternativeName>
        <fullName evidence="4">30S ribosomal protein S12</fullName>
    </alternativeName>
</protein>
<reference key="1">
    <citation type="journal article" date="2005" name="Arch. Microbiol.">
        <title>The genome sequence of an anaerobic aromatic-degrading denitrifying bacterium, strain EbN1.</title>
        <authorList>
            <person name="Rabus R."/>
            <person name="Kube M."/>
            <person name="Heider J."/>
            <person name="Beck A."/>
            <person name="Heitmann K."/>
            <person name="Widdel F."/>
            <person name="Reinhardt R."/>
        </authorList>
    </citation>
    <scope>NUCLEOTIDE SEQUENCE [LARGE SCALE GENOMIC DNA]</scope>
    <source>
        <strain>DSM 19018 / LMG 30748 / EbN1</strain>
    </source>
</reference>
<proteinExistence type="inferred from homology"/>
<sequence length="125" mass="13909">MPTINQLVRKPRQLAVIKSKVPALDACPQKRGVCTRVYTTTPKKPNSALRKVAKVRLTNGFEVISYIGGEGHNLQEHSVVLIRGGRVKDLPGVRYHIVRGSLDLQGVKDRKQSRSKYGAKRPKKA</sequence>
<organism>
    <name type="scientific">Aromatoleum aromaticum (strain DSM 19018 / LMG 30748 / EbN1)</name>
    <name type="common">Azoarcus sp. (strain EbN1)</name>
    <dbReference type="NCBI Taxonomy" id="76114"/>
    <lineage>
        <taxon>Bacteria</taxon>
        <taxon>Pseudomonadati</taxon>
        <taxon>Pseudomonadota</taxon>
        <taxon>Betaproteobacteria</taxon>
        <taxon>Rhodocyclales</taxon>
        <taxon>Rhodocyclaceae</taxon>
        <taxon>Aromatoleum</taxon>
    </lineage>
</organism>
<gene>
    <name evidence="2" type="primary">rpsL</name>
    <name type="ordered locus">AZOSEA21520</name>
    <name type="ORF">ebA3820</name>
</gene>
<evidence type="ECO:0000250" key="1"/>
<evidence type="ECO:0000255" key="2">
    <source>
        <dbReference type="HAMAP-Rule" id="MF_00403"/>
    </source>
</evidence>
<evidence type="ECO:0000256" key="3">
    <source>
        <dbReference type="SAM" id="MobiDB-lite"/>
    </source>
</evidence>
<evidence type="ECO:0000305" key="4"/>
<keyword id="KW-0488">Methylation</keyword>
<keyword id="KW-1185">Reference proteome</keyword>
<keyword id="KW-0687">Ribonucleoprotein</keyword>
<keyword id="KW-0689">Ribosomal protein</keyword>
<keyword id="KW-0694">RNA-binding</keyword>
<keyword id="KW-0699">rRNA-binding</keyword>
<keyword id="KW-0820">tRNA-binding</keyword>
<accession>Q5P337</accession>
<comment type="function">
    <text evidence="2">With S4 and S5 plays an important role in translational accuracy.</text>
</comment>
<comment type="function">
    <text evidence="2">Interacts with and stabilizes bases of the 16S rRNA that are involved in tRNA selection in the A site and with the mRNA backbone. Located at the interface of the 30S and 50S subunits, it traverses the body of the 30S subunit contacting proteins on the other side and probably holding the rRNA structure together. The combined cluster of proteins S8, S12 and S17 appears to hold together the shoulder and platform of the 30S subunit.</text>
</comment>
<comment type="subunit">
    <text evidence="2">Part of the 30S ribosomal subunit. Contacts proteins S8 and S17. May interact with IF1 in the 30S initiation complex.</text>
</comment>
<comment type="similarity">
    <text evidence="2">Belongs to the universal ribosomal protein uS12 family.</text>
</comment>
<comment type="sequence caution" evidence="4">
    <conflict type="erroneous initiation">
        <sequence resource="EMBL-CDS" id="CAI08277"/>
    </conflict>
</comment>
<name>RS12_AROAE</name>
<feature type="chain" id="PRO_0000146167" description="Small ribosomal subunit protein uS12">
    <location>
        <begin position="1"/>
        <end position="125"/>
    </location>
</feature>
<feature type="region of interest" description="Disordered" evidence="3">
    <location>
        <begin position="106"/>
        <end position="125"/>
    </location>
</feature>
<feature type="compositionally biased region" description="Basic residues" evidence="3">
    <location>
        <begin position="113"/>
        <end position="125"/>
    </location>
</feature>
<feature type="modified residue" description="3-methylthioaspartic acid" evidence="1">
    <location>
        <position position="89"/>
    </location>
</feature>